<sequence length="337" mass="38505">MQIVEQMKDKALAELNLVKDKKTLDDIRVKYLGKKGELTEMMKLIATLPNDEKPKLGQAVNIAKQALQEAINLKLANFEEQELNEKLAQEKIDITLSGVGQNQGSLHPVTKTLNRIEAFFKQNGFAIEFGPEIESDYYNFETLNIPSHHPARAMHDTFYIDETHVLRTHTSGVQIRTMEKQQPPIRIIAPGRVYRCDSDITHTPMFHQVEGLLVDKDVSFADLKGLLHVFLNSFFEKDLKVRFRPSYFPFTEPSAEADIECVMCDGKGCRVCKHTGWLEVLGCGMVHPKVLKAGNIDSEKYQGFAFGMGVERLSMLRYGIDDLRMFFENDLRFLKQF</sequence>
<gene>
    <name evidence="1" type="primary">pheS</name>
    <name type="ordered locus">FTL_1197</name>
</gene>
<evidence type="ECO:0000255" key="1">
    <source>
        <dbReference type="HAMAP-Rule" id="MF_00281"/>
    </source>
</evidence>
<accession>Q2A322</accession>
<comment type="catalytic activity">
    <reaction evidence="1">
        <text>tRNA(Phe) + L-phenylalanine + ATP = L-phenylalanyl-tRNA(Phe) + AMP + diphosphate + H(+)</text>
        <dbReference type="Rhea" id="RHEA:19413"/>
        <dbReference type="Rhea" id="RHEA-COMP:9668"/>
        <dbReference type="Rhea" id="RHEA-COMP:9699"/>
        <dbReference type="ChEBI" id="CHEBI:15378"/>
        <dbReference type="ChEBI" id="CHEBI:30616"/>
        <dbReference type="ChEBI" id="CHEBI:33019"/>
        <dbReference type="ChEBI" id="CHEBI:58095"/>
        <dbReference type="ChEBI" id="CHEBI:78442"/>
        <dbReference type="ChEBI" id="CHEBI:78531"/>
        <dbReference type="ChEBI" id="CHEBI:456215"/>
        <dbReference type="EC" id="6.1.1.20"/>
    </reaction>
</comment>
<comment type="cofactor">
    <cofactor evidence="1">
        <name>Mg(2+)</name>
        <dbReference type="ChEBI" id="CHEBI:18420"/>
    </cofactor>
    <text evidence="1">Binds 2 magnesium ions per tetramer.</text>
</comment>
<comment type="subunit">
    <text evidence="1">Tetramer of two alpha and two beta subunits.</text>
</comment>
<comment type="subcellular location">
    <subcellularLocation>
        <location evidence="1">Cytoplasm</location>
    </subcellularLocation>
</comment>
<comment type="similarity">
    <text evidence="1">Belongs to the class-II aminoacyl-tRNA synthetase family. Phe-tRNA synthetase alpha subunit type 1 subfamily.</text>
</comment>
<reference key="1">
    <citation type="submission" date="2006-03" db="EMBL/GenBank/DDBJ databases">
        <title>Complete genome sequence of Francisella tularensis LVS (Live Vaccine Strain).</title>
        <authorList>
            <person name="Chain P."/>
            <person name="Larimer F."/>
            <person name="Land M."/>
            <person name="Stilwagen S."/>
            <person name="Larsson P."/>
            <person name="Bearden S."/>
            <person name="Chu M."/>
            <person name="Oyston P."/>
            <person name="Forsman M."/>
            <person name="Andersson S."/>
            <person name="Lindler L."/>
            <person name="Titball R."/>
            <person name="Garcia E."/>
        </authorList>
    </citation>
    <scope>NUCLEOTIDE SEQUENCE [LARGE SCALE GENOMIC DNA]</scope>
    <source>
        <strain>LVS</strain>
    </source>
</reference>
<feature type="chain" id="PRO_1000006832" description="Phenylalanine--tRNA ligase alpha subunit">
    <location>
        <begin position="1"/>
        <end position="337"/>
    </location>
</feature>
<feature type="binding site" evidence="1">
    <location>
        <position position="252"/>
    </location>
    <ligand>
        <name>Mg(2+)</name>
        <dbReference type="ChEBI" id="CHEBI:18420"/>
        <note>shared with beta subunit</note>
    </ligand>
</feature>
<organism>
    <name type="scientific">Francisella tularensis subsp. holarctica (strain LVS)</name>
    <dbReference type="NCBI Taxonomy" id="376619"/>
    <lineage>
        <taxon>Bacteria</taxon>
        <taxon>Pseudomonadati</taxon>
        <taxon>Pseudomonadota</taxon>
        <taxon>Gammaproteobacteria</taxon>
        <taxon>Thiotrichales</taxon>
        <taxon>Francisellaceae</taxon>
        <taxon>Francisella</taxon>
    </lineage>
</organism>
<dbReference type="EC" id="6.1.1.20" evidence="1"/>
<dbReference type="EMBL" id="AM233362">
    <property type="protein sequence ID" value="CAJ79636.1"/>
    <property type="molecule type" value="Genomic_DNA"/>
</dbReference>
<dbReference type="RefSeq" id="WP_003016273.1">
    <property type="nucleotide sequence ID" value="NZ_CP009694.1"/>
</dbReference>
<dbReference type="SMR" id="Q2A322"/>
<dbReference type="KEGG" id="ftl:FTL_1197"/>
<dbReference type="Proteomes" id="UP000001944">
    <property type="component" value="Chromosome"/>
</dbReference>
<dbReference type="GO" id="GO:0005737">
    <property type="term" value="C:cytoplasm"/>
    <property type="evidence" value="ECO:0007669"/>
    <property type="project" value="UniProtKB-SubCell"/>
</dbReference>
<dbReference type="GO" id="GO:0005524">
    <property type="term" value="F:ATP binding"/>
    <property type="evidence" value="ECO:0007669"/>
    <property type="project" value="UniProtKB-UniRule"/>
</dbReference>
<dbReference type="GO" id="GO:0000287">
    <property type="term" value="F:magnesium ion binding"/>
    <property type="evidence" value="ECO:0007669"/>
    <property type="project" value="UniProtKB-UniRule"/>
</dbReference>
<dbReference type="GO" id="GO:0004826">
    <property type="term" value="F:phenylalanine-tRNA ligase activity"/>
    <property type="evidence" value="ECO:0007669"/>
    <property type="project" value="UniProtKB-UniRule"/>
</dbReference>
<dbReference type="GO" id="GO:0000049">
    <property type="term" value="F:tRNA binding"/>
    <property type="evidence" value="ECO:0007669"/>
    <property type="project" value="InterPro"/>
</dbReference>
<dbReference type="GO" id="GO:0006432">
    <property type="term" value="P:phenylalanyl-tRNA aminoacylation"/>
    <property type="evidence" value="ECO:0007669"/>
    <property type="project" value="UniProtKB-UniRule"/>
</dbReference>
<dbReference type="CDD" id="cd00496">
    <property type="entry name" value="PheRS_alpha_core"/>
    <property type="match status" value="1"/>
</dbReference>
<dbReference type="FunFam" id="3.30.930.10:FF:000003">
    <property type="entry name" value="Phenylalanine--tRNA ligase alpha subunit"/>
    <property type="match status" value="1"/>
</dbReference>
<dbReference type="Gene3D" id="3.30.930.10">
    <property type="entry name" value="Bira Bifunctional Protein, Domain 2"/>
    <property type="match status" value="1"/>
</dbReference>
<dbReference type="HAMAP" id="MF_00281">
    <property type="entry name" value="Phe_tRNA_synth_alpha1"/>
    <property type="match status" value="1"/>
</dbReference>
<dbReference type="InterPro" id="IPR006195">
    <property type="entry name" value="aa-tRNA-synth_II"/>
</dbReference>
<dbReference type="InterPro" id="IPR045864">
    <property type="entry name" value="aa-tRNA-synth_II/BPL/LPL"/>
</dbReference>
<dbReference type="InterPro" id="IPR004529">
    <property type="entry name" value="Phe-tRNA-synth_IIc_asu"/>
</dbReference>
<dbReference type="InterPro" id="IPR004188">
    <property type="entry name" value="Phe-tRNA_ligase_II_N"/>
</dbReference>
<dbReference type="InterPro" id="IPR022911">
    <property type="entry name" value="Phe_tRNA_ligase_alpha1_bac"/>
</dbReference>
<dbReference type="InterPro" id="IPR002319">
    <property type="entry name" value="Phenylalanyl-tRNA_Synthase"/>
</dbReference>
<dbReference type="InterPro" id="IPR010978">
    <property type="entry name" value="tRNA-bd_arm"/>
</dbReference>
<dbReference type="NCBIfam" id="TIGR00468">
    <property type="entry name" value="pheS"/>
    <property type="match status" value="1"/>
</dbReference>
<dbReference type="PANTHER" id="PTHR11538:SF41">
    <property type="entry name" value="PHENYLALANINE--TRNA LIGASE, MITOCHONDRIAL"/>
    <property type="match status" value="1"/>
</dbReference>
<dbReference type="PANTHER" id="PTHR11538">
    <property type="entry name" value="PHENYLALANYL-TRNA SYNTHETASE"/>
    <property type="match status" value="1"/>
</dbReference>
<dbReference type="Pfam" id="PF02912">
    <property type="entry name" value="Phe_tRNA-synt_N"/>
    <property type="match status" value="1"/>
</dbReference>
<dbReference type="Pfam" id="PF01409">
    <property type="entry name" value="tRNA-synt_2d"/>
    <property type="match status" value="1"/>
</dbReference>
<dbReference type="SUPFAM" id="SSF55681">
    <property type="entry name" value="Class II aaRS and biotin synthetases"/>
    <property type="match status" value="1"/>
</dbReference>
<dbReference type="SUPFAM" id="SSF46589">
    <property type="entry name" value="tRNA-binding arm"/>
    <property type="match status" value="1"/>
</dbReference>
<dbReference type="PROSITE" id="PS50862">
    <property type="entry name" value="AA_TRNA_LIGASE_II"/>
    <property type="match status" value="1"/>
</dbReference>
<name>SYFA_FRATH</name>
<proteinExistence type="inferred from homology"/>
<protein>
    <recommendedName>
        <fullName evidence="1">Phenylalanine--tRNA ligase alpha subunit</fullName>
        <ecNumber evidence="1">6.1.1.20</ecNumber>
    </recommendedName>
    <alternativeName>
        <fullName evidence="1">Phenylalanyl-tRNA synthetase alpha subunit</fullName>
        <shortName evidence="1">PheRS</shortName>
    </alternativeName>
</protein>
<keyword id="KW-0030">Aminoacyl-tRNA synthetase</keyword>
<keyword id="KW-0067">ATP-binding</keyword>
<keyword id="KW-0963">Cytoplasm</keyword>
<keyword id="KW-0436">Ligase</keyword>
<keyword id="KW-0460">Magnesium</keyword>
<keyword id="KW-0479">Metal-binding</keyword>
<keyword id="KW-0547">Nucleotide-binding</keyword>
<keyword id="KW-0648">Protein biosynthesis</keyword>
<keyword id="KW-1185">Reference proteome</keyword>